<protein>
    <recommendedName>
        <fullName evidence="1">UPF0178 protein Tgr7_2584</fullName>
    </recommendedName>
</protein>
<feature type="chain" id="PRO_1000197837" description="UPF0178 protein Tgr7_2584">
    <location>
        <begin position="1"/>
        <end position="147"/>
    </location>
</feature>
<dbReference type="EMBL" id="CP001339">
    <property type="protein sequence ID" value="ACL73659.1"/>
    <property type="molecule type" value="Genomic_DNA"/>
</dbReference>
<dbReference type="RefSeq" id="WP_012639134.1">
    <property type="nucleotide sequence ID" value="NC_011901.1"/>
</dbReference>
<dbReference type="STRING" id="396588.Tgr7_2584"/>
<dbReference type="KEGG" id="tgr:Tgr7_2584"/>
<dbReference type="eggNOG" id="COG1671">
    <property type="taxonomic scope" value="Bacteria"/>
</dbReference>
<dbReference type="HOGENOM" id="CLU_106619_2_1_6"/>
<dbReference type="OrthoDB" id="9798918at2"/>
<dbReference type="Proteomes" id="UP000002383">
    <property type="component" value="Chromosome"/>
</dbReference>
<dbReference type="CDD" id="cd18720">
    <property type="entry name" value="PIN_YqxD-like"/>
    <property type="match status" value="1"/>
</dbReference>
<dbReference type="HAMAP" id="MF_00489">
    <property type="entry name" value="UPF0178"/>
    <property type="match status" value="1"/>
</dbReference>
<dbReference type="InterPro" id="IPR003791">
    <property type="entry name" value="UPF0178"/>
</dbReference>
<dbReference type="NCBIfam" id="NF001095">
    <property type="entry name" value="PRK00124.1"/>
    <property type="match status" value="1"/>
</dbReference>
<dbReference type="PANTHER" id="PTHR35146">
    <property type="entry name" value="UPF0178 PROTEIN YAII"/>
    <property type="match status" value="1"/>
</dbReference>
<dbReference type="PANTHER" id="PTHR35146:SF1">
    <property type="entry name" value="UPF0178 PROTEIN YAII"/>
    <property type="match status" value="1"/>
</dbReference>
<dbReference type="Pfam" id="PF02639">
    <property type="entry name" value="DUF188"/>
    <property type="match status" value="1"/>
</dbReference>
<gene>
    <name type="ordered locus">Tgr7_2584</name>
</gene>
<accession>B8GM72</accession>
<evidence type="ECO:0000255" key="1">
    <source>
        <dbReference type="HAMAP-Rule" id="MF_00489"/>
    </source>
</evidence>
<organism>
    <name type="scientific">Thioalkalivibrio sulfidiphilus (strain HL-EbGR7)</name>
    <dbReference type="NCBI Taxonomy" id="396588"/>
    <lineage>
        <taxon>Bacteria</taxon>
        <taxon>Pseudomonadati</taxon>
        <taxon>Pseudomonadota</taxon>
        <taxon>Gammaproteobacteria</taxon>
        <taxon>Chromatiales</taxon>
        <taxon>Ectothiorhodospiraceae</taxon>
        <taxon>Thioalkalivibrio</taxon>
    </lineage>
</organism>
<sequence>MKIWVDADACPGVIREILFRAAQRTGVALTLVANQPVKVPPSPHIRSLQVSAGFDVADNEIVRRVSAGDLVITSDIPLAAEVIAKGGHALSPRGELHTRENIGARLNMRDFMDTLRASGIQSGGPPALNQKDRQAFANQLDRLLAKR</sequence>
<proteinExistence type="inferred from homology"/>
<reference key="1">
    <citation type="journal article" date="2011" name="Stand. Genomic Sci.">
        <title>Complete genome sequence of 'Thioalkalivibrio sulfidophilus' HL-EbGr7.</title>
        <authorList>
            <person name="Muyzer G."/>
            <person name="Sorokin D.Y."/>
            <person name="Mavromatis K."/>
            <person name="Lapidus A."/>
            <person name="Clum A."/>
            <person name="Ivanova N."/>
            <person name="Pati A."/>
            <person name="d'Haeseleer P."/>
            <person name="Woyke T."/>
            <person name="Kyrpides N.C."/>
        </authorList>
    </citation>
    <scope>NUCLEOTIDE SEQUENCE [LARGE SCALE GENOMIC DNA]</scope>
    <source>
        <strain>HL-EbGR7</strain>
    </source>
</reference>
<name>Y2584_THISH</name>
<keyword id="KW-1185">Reference proteome</keyword>
<comment type="similarity">
    <text evidence="1">Belongs to the UPF0178 family.</text>
</comment>